<name>PHR_ALKPO</name>
<proteinExistence type="inferred from homology"/>
<evidence type="ECO:0000250" key="1"/>
<evidence type="ECO:0000305" key="2"/>
<sequence>MGNSDSLKAVWFRRDFRLHDHTALKHAIEAIEKHGGKWLAFFYLDPKTASVEPVHHDYFFQTVMQFKQMLKTNGGDLYIITGTIEGALSKLLQAFPEIDAVYANDDRVGDGRLRDEAAEHFLAKQSIPFYTFEDAYLTEPDQVLKKDGTPYKVFTPYYKAWAKERKRTPAVIKRDVLLGSVHKGTAPDREAETLFNNLIKKCSYDWSAIGEEHAIKRLQMFTKKRLSGYKANRDFPSITGTSRLSPYIKTGAVSSRSIYYHILNAEADSYSAETFLKELAWRDFYRMVHFYEPDCKDREIMEGYRELNWSHDQDDLTSWKRGETGFPIVDAGMRQLLNEGWMHNRLRMITASFLTKDLLIDWRLGERYFERMLIDYDPSSNIGGWQWAASVGTDAVPYFRIFNPVTQSKRFDENGTYIRTYIPELNHVPDHYIHEPWKMSEEEQVKYKCRLDEDYPLPIVDHSKQRKKALSFFKGDDEE</sequence>
<organism>
    <name type="scientific">Alkalihalophilus pseudofirmus (strain ATCC BAA-2126 / JCM 17055 / OF4)</name>
    <name type="common">Bacillus pseudofirmus</name>
    <dbReference type="NCBI Taxonomy" id="398511"/>
    <lineage>
        <taxon>Bacteria</taxon>
        <taxon>Bacillati</taxon>
        <taxon>Bacillota</taxon>
        <taxon>Bacilli</taxon>
        <taxon>Bacillales</taxon>
        <taxon>Bacillaceae</taxon>
        <taxon>Alkalihalophilus</taxon>
    </lineage>
</organism>
<comment type="function">
    <text>Involved in repair of UV radiation-induced DNA damage. Catalyzes the light-dependent monomerization (300-600 nm) of cyclobutyl pyrimidine dimers (in cis-syn configuration), which are formed between adjacent bases on the same DNA strand upon exposure to ultraviolet radiation.</text>
</comment>
<comment type="catalytic activity">
    <reaction>
        <text>cyclobutadipyrimidine (in DNA) = 2 pyrimidine residues (in DNA).</text>
        <dbReference type="EC" id="4.1.99.3"/>
    </reaction>
</comment>
<comment type="cofactor">
    <cofactor evidence="1">
        <name>FAD</name>
        <dbReference type="ChEBI" id="CHEBI:57692"/>
    </cofactor>
    <text evidence="1">Binds 1 FAD per subunit.</text>
</comment>
<comment type="cofactor">
    <cofactor evidence="1">
        <name>(6R)-5,10-methylene-5,6,7,8-tetrahydrofolate</name>
        <dbReference type="ChEBI" id="CHEBI:15636"/>
    </cofactor>
    <text evidence="1">Binds 1 5,10-methenyltetrahydrofolate (MTHF) non-covalently per subunit.</text>
</comment>
<comment type="subunit">
    <text evidence="1">Monomer.</text>
</comment>
<comment type="similarity">
    <text evidence="2">Belongs to the DNA photolyase class-1 family.</text>
</comment>
<gene>
    <name type="primary">phr</name>
    <name type="ordered locus">BpOF4_00935</name>
</gene>
<dbReference type="EC" id="4.1.99.3"/>
<dbReference type="EMBL" id="CP001878">
    <property type="protein sequence ID" value="ADC48255.1"/>
    <property type="molecule type" value="Genomic_DNA"/>
</dbReference>
<dbReference type="EMBL" id="M94110">
    <property type="protein sequence ID" value="AAA22361.1"/>
    <property type="molecule type" value="Genomic_DNA"/>
</dbReference>
<dbReference type="SMR" id="Q04449"/>
<dbReference type="STRING" id="398511.BpOF4_00935"/>
<dbReference type="KEGG" id="bpf:BpOF4_00935"/>
<dbReference type="eggNOG" id="COG0415">
    <property type="taxonomic scope" value="Bacteria"/>
</dbReference>
<dbReference type="HOGENOM" id="CLU_010348_2_2_9"/>
<dbReference type="Proteomes" id="UP000001544">
    <property type="component" value="Chromosome"/>
</dbReference>
<dbReference type="GO" id="GO:0003904">
    <property type="term" value="F:deoxyribodipyrimidine photo-lyase activity"/>
    <property type="evidence" value="ECO:0007669"/>
    <property type="project" value="UniProtKB-EC"/>
</dbReference>
<dbReference type="GO" id="GO:0003677">
    <property type="term" value="F:DNA binding"/>
    <property type="evidence" value="ECO:0007669"/>
    <property type="project" value="UniProtKB-KW"/>
</dbReference>
<dbReference type="GO" id="GO:0071949">
    <property type="term" value="F:FAD binding"/>
    <property type="evidence" value="ECO:0007669"/>
    <property type="project" value="TreeGrafter"/>
</dbReference>
<dbReference type="GO" id="GO:0006281">
    <property type="term" value="P:DNA repair"/>
    <property type="evidence" value="ECO:0007669"/>
    <property type="project" value="UniProtKB-KW"/>
</dbReference>
<dbReference type="GO" id="GO:0009416">
    <property type="term" value="P:response to light stimulus"/>
    <property type="evidence" value="ECO:0007669"/>
    <property type="project" value="TreeGrafter"/>
</dbReference>
<dbReference type="FunFam" id="1.10.579.10:FF:000003">
    <property type="entry name" value="Deoxyribodipyrimidine photo-lyase"/>
    <property type="match status" value="1"/>
</dbReference>
<dbReference type="Gene3D" id="1.25.40.80">
    <property type="match status" value="1"/>
</dbReference>
<dbReference type="Gene3D" id="1.10.579.10">
    <property type="entry name" value="DNA Cyclobutane Dipyrimidine Photolyase, subunit A, domain 3"/>
    <property type="match status" value="1"/>
</dbReference>
<dbReference type="Gene3D" id="3.40.50.620">
    <property type="entry name" value="HUPs"/>
    <property type="match status" value="1"/>
</dbReference>
<dbReference type="InterPro" id="IPR036134">
    <property type="entry name" value="Crypto/Photolyase_FAD-like_sf"/>
</dbReference>
<dbReference type="InterPro" id="IPR036155">
    <property type="entry name" value="Crypto/Photolyase_N_sf"/>
</dbReference>
<dbReference type="InterPro" id="IPR005101">
    <property type="entry name" value="Cryptochr/Photolyase_FAD-bd"/>
</dbReference>
<dbReference type="InterPro" id="IPR002081">
    <property type="entry name" value="Cryptochrome/DNA_photolyase_1"/>
</dbReference>
<dbReference type="InterPro" id="IPR018394">
    <property type="entry name" value="DNA_photolyase_1_CS_C"/>
</dbReference>
<dbReference type="InterPro" id="IPR006050">
    <property type="entry name" value="DNA_photolyase_N"/>
</dbReference>
<dbReference type="InterPro" id="IPR014729">
    <property type="entry name" value="Rossmann-like_a/b/a_fold"/>
</dbReference>
<dbReference type="PANTHER" id="PTHR11455">
    <property type="entry name" value="CRYPTOCHROME"/>
    <property type="match status" value="1"/>
</dbReference>
<dbReference type="PANTHER" id="PTHR11455:SF9">
    <property type="entry name" value="CRYPTOCHROME CIRCADIAN CLOCK 5 ISOFORM X1"/>
    <property type="match status" value="1"/>
</dbReference>
<dbReference type="Pfam" id="PF00875">
    <property type="entry name" value="DNA_photolyase"/>
    <property type="match status" value="1"/>
</dbReference>
<dbReference type="Pfam" id="PF03441">
    <property type="entry name" value="FAD_binding_7"/>
    <property type="match status" value="1"/>
</dbReference>
<dbReference type="PRINTS" id="PR00147">
    <property type="entry name" value="DNAPHOTLYASE"/>
</dbReference>
<dbReference type="SUPFAM" id="SSF48173">
    <property type="entry name" value="Cryptochrome/photolyase FAD-binding domain"/>
    <property type="match status" value="1"/>
</dbReference>
<dbReference type="SUPFAM" id="SSF52425">
    <property type="entry name" value="Cryptochrome/photolyase, N-terminal domain"/>
    <property type="match status" value="1"/>
</dbReference>
<dbReference type="PROSITE" id="PS00394">
    <property type="entry name" value="DNA_PHOTOLYASES_1_1"/>
    <property type="match status" value="1"/>
</dbReference>
<dbReference type="PROSITE" id="PS00691">
    <property type="entry name" value="DNA_PHOTOLYASES_1_2"/>
    <property type="match status" value="1"/>
</dbReference>
<dbReference type="PROSITE" id="PS51645">
    <property type="entry name" value="PHR_CRY_ALPHA_BETA"/>
    <property type="match status" value="1"/>
</dbReference>
<accession>Q04449</accession>
<accession>D3FU53</accession>
<feature type="chain" id="PRO_0000085105" description="Deoxyribodipyrimidine photo-lyase">
    <location>
        <begin position="1"/>
        <end position="479"/>
    </location>
</feature>
<feature type="domain" description="Photolyase/cryptochrome alpha/beta">
    <location>
        <begin position="6"/>
        <end position="137"/>
    </location>
</feature>
<feature type="region of interest" description="Interaction with DNA" evidence="1">
    <location>
        <begin position="278"/>
        <end position="285"/>
    </location>
</feature>
<feature type="region of interest" description="Interaction with DNA" evidence="1">
    <location>
        <begin position="344"/>
        <end position="345"/>
    </location>
</feature>
<feature type="binding site" evidence="1">
    <location>
        <position position="229"/>
    </location>
    <ligand>
        <name>FAD</name>
        <dbReference type="ChEBI" id="CHEBI:57692"/>
    </ligand>
</feature>
<feature type="binding site" evidence="1">
    <location>
        <position position="233"/>
    </location>
    <ligand>
        <name>DNA</name>
        <dbReference type="ChEBI" id="CHEBI:16991"/>
    </ligand>
</feature>
<feature type="binding site" evidence="1">
    <location>
        <begin position="241"/>
        <end position="245"/>
    </location>
    <ligand>
        <name>FAD</name>
        <dbReference type="ChEBI" id="CHEBI:57692"/>
    </ligand>
</feature>
<feature type="binding site" evidence="1">
    <location>
        <begin position="278"/>
        <end position="285"/>
    </location>
    <ligand>
        <name>FAD</name>
        <dbReference type="ChEBI" id="CHEBI:57692"/>
    </ligand>
</feature>
<feature type="binding site" evidence="1">
    <location>
        <begin position="375"/>
        <end position="377"/>
    </location>
    <ligand>
        <name>FAD</name>
        <dbReference type="ChEBI" id="CHEBI:57692"/>
    </ligand>
</feature>
<feature type="binding site" evidence="1">
    <location>
        <position position="407"/>
    </location>
    <ligand>
        <name>DNA</name>
        <dbReference type="ChEBI" id="CHEBI:16991"/>
    </ligand>
</feature>
<feature type="site" description="Electron transfer via tryptophanyl radical" evidence="1">
    <location>
        <position position="309"/>
    </location>
</feature>
<feature type="site" description="Electron transfer via tryptophanyl radical" evidence="1">
    <location>
        <position position="362"/>
    </location>
</feature>
<feature type="site" description="Electron transfer via tryptophanyl radical" evidence="1">
    <location>
        <position position="385"/>
    </location>
</feature>
<keyword id="KW-0157">Chromophore</keyword>
<keyword id="KW-0227">DNA damage</keyword>
<keyword id="KW-0234">DNA repair</keyword>
<keyword id="KW-0238">DNA-binding</keyword>
<keyword id="KW-0274">FAD</keyword>
<keyword id="KW-0285">Flavoprotein</keyword>
<keyword id="KW-0456">Lyase</keyword>
<keyword id="KW-1185">Reference proteome</keyword>
<reference key="1">
    <citation type="journal article" date="2011" name="Environ. Microbiol.">
        <title>Genome of alkaliphilic Bacillus pseudofirmus OF4 reveals adaptations that support the ability to grow in an external pH range from 7.5 to 11.4.</title>
        <authorList>
            <person name="Janto B."/>
            <person name="Ahmed A."/>
            <person name="Ito M."/>
            <person name="Liu J."/>
            <person name="Hicks D.B."/>
            <person name="Pagni S."/>
            <person name="Fackelmayer O.J."/>
            <person name="Smith T.A."/>
            <person name="Earl J."/>
            <person name="Elbourne L.D."/>
            <person name="Hassan K."/>
            <person name="Paulsen I.T."/>
            <person name="Kolsto A.B."/>
            <person name="Tourasse N.J."/>
            <person name="Ehrlich G.D."/>
            <person name="Boissy R."/>
            <person name="Ivey D.M."/>
            <person name="Li G."/>
            <person name="Xue Y."/>
            <person name="Ma Y."/>
            <person name="Hu F.Z."/>
            <person name="Krulwich T.A."/>
        </authorList>
    </citation>
    <scope>NUCLEOTIDE SEQUENCE [LARGE SCALE GENOMIC DNA]</scope>
    <source>
        <strain>ATCC BAA-2126 / JCM 17055 / OF4</strain>
    </source>
</reference>
<reference key="2">
    <citation type="journal article" date="1993" name="J. Biol. Chem.">
        <title>Cloning of the cta operon from alkaliphilic Bacillus firmus OF4 and characterization of the pH-regulated cytochrome caa3 oxidase it encodes.</title>
        <authorList>
            <person name="Quirk P.G."/>
            <person name="Hicks D.B."/>
            <person name="Krulwich T.A."/>
        </authorList>
    </citation>
    <scope>NUCLEOTIDE SEQUENCE [GENOMIC DNA] OF 141-479</scope>
</reference>
<reference key="3">
    <citation type="journal article" date="2005" name="Biochim. Biophys. Acta">
        <title>Light-driven enzymatic catalysis of DNA repair: a review of recent biophysical studies on photolyase.</title>
        <authorList>
            <person name="Weber S."/>
        </authorList>
    </citation>
    <scope>REVIEW</scope>
</reference>
<protein>
    <recommendedName>
        <fullName>Deoxyribodipyrimidine photo-lyase</fullName>
        <ecNumber>4.1.99.3</ecNumber>
    </recommendedName>
    <alternativeName>
        <fullName>DNA photolyase</fullName>
    </alternativeName>
    <alternativeName>
        <fullName>Photoreactivating enzyme</fullName>
    </alternativeName>
</protein>